<gene>
    <name evidence="2" type="primary">trmB</name>
    <name type="ordered locus">JTY_0214</name>
</gene>
<dbReference type="EC" id="2.1.1.33" evidence="2"/>
<dbReference type="EMBL" id="AP010918">
    <property type="protein sequence ID" value="BAH24512.1"/>
    <property type="molecule type" value="Genomic_DNA"/>
</dbReference>
<dbReference type="RefSeq" id="WP_003401204.1">
    <property type="nucleotide sequence ID" value="NZ_CP014566.1"/>
</dbReference>
<dbReference type="SMR" id="C1AJN3"/>
<dbReference type="GeneID" id="45424179"/>
<dbReference type="KEGG" id="mbt:JTY_0214"/>
<dbReference type="HOGENOM" id="CLU_050910_0_2_11"/>
<dbReference type="UniPathway" id="UPA00989"/>
<dbReference type="GO" id="GO:0043527">
    <property type="term" value="C:tRNA methyltransferase complex"/>
    <property type="evidence" value="ECO:0007669"/>
    <property type="project" value="TreeGrafter"/>
</dbReference>
<dbReference type="GO" id="GO:0008176">
    <property type="term" value="F:tRNA (guanine(46)-N7)-methyltransferase activity"/>
    <property type="evidence" value="ECO:0007669"/>
    <property type="project" value="UniProtKB-UniRule"/>
</dbReference>
<dbReference type="CDD" id="cd02440">
    <property type="entry name" value="AdoMet_MTases"/>
    <property type="match status" value="1"/>
</dbReference>
<dbReference type="FunFam" id="3.40.50.150:FF:000035">
    <property type="entry name" value="tRNA (guanine-N(7)-)-methyltransferase"/>
    <property type="match status" value="1"/>
</dbReference>
<dbReference type="Gene3D" id="3.40.50.150">
    <property type="entry name" value="Vaccinia Virus protein VP39"/>
    <property type="match status" value="1"/>
</dbReference>
<dbReference type="HAMAP" id="MF_01057">
    <property type="entry name" value="tRNA_methyltr_TrmB"/>
    <property type="match status" value="1"/>
</dbReference>
<dbReference type="InterPro" id="IPR029063">
    <property type="entry name" value="SAM-dependent_MTases_sf"/>
</dbReference>
<dbReference type="InterPro" id="IPR003358">
    <property type="entry name" value="tRNA_(Gua-N-7)_MeTrfase_Trmb"/>
</dbReference>
<dbReference type="InterPro" id="IPR055361">
    <property type="entry name" value="tRNA_methyltr_TrmB_bact"/>
</dbReference>
<dbReference type="NCBIfam" id="TIGR00091">
    <property type="entry name" value="tRNA (guanosine(46)-N7)-methyltransferase TrmB"/>
    <property type="match status" value="1"/>
</dbReference>
<dbReference type="PANTHER" id="PTHR23417">
    <property type="entry name" value="3-DEOXY-D-MANNO-OCTULOSONIC-ACID TRANSFERASE/TRNA GUANINE-N 7 - -METHYLTRANSFERASE"/>
    <property type="match status" value="1"/>
</dbReference>
<dbReference type="PANTHER" id="PTHR23417:SF14">
    <property type="entry name" value="PENTACOTRIPEPTIDE-REPEAT REGION OF PRORP DOMAIN-CONTAINING PROTEIN"/>
    <property type="match status" value="1"/>
</dbReference>
<dbReference type="Pfam" id="PF02390">
    <property type="entry name" value="Methyltransf_4"/>
    <property type="match status" value="1"/>
</dbReference>
<dbReference type="SUPFAM" id="SSF53335">
    <property type="entry name" value="S-adenosyl-L-methionine-dependent methyltransferases"/>
    <property type="match status" value="1"/>
</dbReference>
<dbReference type="PROSITE" id="PS51625">
    <property type="entry name" value="SAM_MT_TRMB"/>
    <property type="match status" value="1"/>
</dbReference>
<feature type="chain" id="PRO_1000149658" description="tRNA (guanine-N(7)-)-methyltransferase">
    <location>
        <begin position="1"/>
        <end position="263"/>
    </location>
</feature>
<feature type="region of interest" description="Disordered" evidence="3">
    <location>
        <begin position="1"/>
        <end position="39"/>
    </location>
</feature>
<feature type="active site" evidence="1">
    <location>
        <position position="159"/>
    </location>
</feature>
<feature type="binding site" evidence="2">
    <location>
        <position position="82"/>
    </location>
    <ligand>
        <name>S-adenosyl-L-methionine</name>
        <dbReference type="ChEBI" id="CHEBI:59789"/>
    </ligand>
</feature>
<feature type="binding site" evidence="2">
    <location>
        <position position="107"/>
    </location>
    <ligand>
        <name>S-adenosyl-L-methionine</name>
        <dbReference type="ChEBI" id="CHEBI:59789"/>
    </ligand>
</feature>
<feature type="binding site" evidence="2">
    <location>
        <position position="136"/>
    </location>
    <ligand>
        <name>S-adenosyl-L-methionine</name>
        <dbReference type="ChEBI" id="CHEBI:59789"/>
    </ligand>
</feature>
<feature type="binding site" evidence="2">
    <location>
        <position position="159"/>
    </location>
    <ligand>
        <name>S-adenosyl-L-methionine</name>
        <dbReference type="ChEBI" id="CHEBI:59789"/>
    </ligand>
</feature>
<feature type="binding site" evidence="2">
    <location>
        <position position="163"/>
    </location>
    <ligand>
        <name>substrate</name>
    </ligand>
</feature>
<feature type="binding site" evidence="2">
    <location>
        <position position="195"/>
    </location>
    <ligand>
        <name>substrate</name>
    </ligand>
</feature>
<feature type="binding site" evidence="2">
    <location>
        <begin position="232"/>
        <end position="235"/>
    </location>
    <ligand>
        <name>substrate</name>
    </ligand>
</feature>
<protein>
    <recommendedName>
        <fullName evidence="2">tRNA (guanine-N(7)-)-methyltransferase</fullName>
        <ecNumber evidence="2">2.1.1.33</ecNumber>
    </recommendedName>
    <alternativeName>
        <fullName evidence="2">tRNA (guanine(46)-N(7))-methyltransferase</fullName>
    </alternativeName>
    <alternativeName>
        <fullName evidence="2">tRNA(m7G46)-methyltransferase</fullName>
    </alternativeName>
</protein>
<keyword id="KW-0489">Methyltransferase</keyword>
<keyword id="KW-0949">S-adenosyl-L-methionine</keyword>
<keyword id="KW-0808">Transferase</keyword>
<keyword id="KW-0819">tRNA processing</keyword>
<reference key="1">
    <citation type="journal article" date="2009" name="Vaccine">
        <title>Whole genome sequence analysis of Mycobacterium bovis bacillus Calmette-Guerin (BCG) Tokyo 172: a comparative study of BCG vaccine substrains.</title>
        <authorList>
            <person name="Seki M."/>
            <person name="Honda I."/>
            <person name="Fujita I."/>
            <person name="Yano I."/>
            <person name="Yamamoto S."/>
            <person name="Koyama A."/>
        </authorList>
    </citation>
    <scope>NUCLEOTIDE SEQUENCE [LARGE SCALE GENOMIC DNA]</scope>
    <source>
        <strain>BCG / Tokyo 172 / ATCC 35737 / TMC 1019</strain>
    </source>
</reference>
<organism>
    <name type="scientific">Mycobacterium bovis (strain BCG / Tokyo 172 / ATCC 35737 / TMC 1019)</name>
    <dbReference type="NCBI Taxonomy" id="561275"/>
    <lineage>
        <taxon>Bacteria</taxon>
        <taxon>Bacillati</taxon>
        <taxon>Actinomycetota</taxon>
        <taxon>Actinomycetes</taxon>
        <taxon>Mycobacteriales</taxon>
        <taxon>Mycobacteriaceae</taxon>
        <taxon>Mycobacterium</taxon>
        <taxon>Mycobacterium tuberculosis complex</taxon>
    </lineage>
</organism>
<proteinExistence type="inferred from homology"/>
<comment type="function">
    <text evidence="2">Catalyzes the formation of N(7)-methylguanine at position 46 (m7G46) in tRNA.</text>
</comment>
<comment type="catalytic activity">
    <reaction evidence="2">
        <text>guanosine(46) in tRNA + S-adenosyl-L-methionine = N(7)-methylguanosine(46) in tRNA + S-adenosyl-L-homocysteine</text>
        <dbReference type="Rhea" id="RHEA:42708"/>
        <dbReference type="Rhea" id="RHEA-COMP:10188"/>
        <dbReference type="Rhea" id="RHEA-COMP:10189"/>
        <dbReference type="ChEBI" id="CHEBI:57856"/>
        <dbReference type="ChEBI" id="CHEBI:59789"/>
        <dbReference type="ChEBI" id="CHEBI:74269"/>
        <dbReference type="ChEBI" id="CHEBI:74480"/>
        <dbReference type="EC" id="2.1.1.33"/>
    </reaction>
</comment>
<comment type="pathway">
    <text evidence="2">tRNA modification; N(7)-methylguanine-tRNA biosynthesis.</text>
</comment>
<comment type="similarity">
    <text evidence="2">Belongs to the class I-like SAM-binding methyltransferase superfamily. TrmB family.</text>
</comment>
<name>TRMB_MYCBT</name>
<accession>C1AJN3</accession>
<sequence length="263" mass="28547">MVHHGQMHAQPGVGLRPDTPVASGQLPSTSIRSRRSGISKAQRETWERLWPELGLLALPQSPRGTPVDTRAWFGRDAPVVLEIGSGSGTSTLAMAKAEPHVDVIAVDVYRRGLAQLLCAIDKVGSDGINIRLILGNAVDVLQHLIAPDSLCGVRVFFPDPWPKARHHKRRLLQPATMALIADRLVPSGVLHAATDHPGYAEHIAAAGDAEPRLVRVDPDTELLPISVVRPATKYERKAQLGGGAVIELLWKKHGCSERDLKIR</sequence>
<evidence type="ECO:0000250" key="1"/>
<evidence type="ECO:0000255" key="2">
    <source>
        <dbReference type="HAMAP-Rule" id="MF_01057"/>
    </source>
</evidence>
<evidence type="ECO:0000256" key="3">
    <source>
        <dbReference type="SAM" id="MobiDB-lite"/>
    </source>
</evidence>